<gene>
    <name type="ORF">ORF35</name>
</gene>
<feature type="chain" id="PRO_0000385065" description="Uncharacterized protein ORF35">
    <location>
        <begin position="1"/>
        <end position="157"/>
    </location>
</feature>
<dbReference type="EMBL" id="AY509253">
    <property type="protein sequence ID" value="AAS00926.1"/>
    <property type="molecule type" value="Genomic_DNA"/>
</dbReference>
<dbReference type="RefSeq" id="YP_024579.1">
    <property type="nucleotide sequence ID" value="NC_005881.2"/>
</dbReference>
<dbReference type="KEGG" id="vg:2948182"/>
<dbReference type="Proteomes" id="UP000007021">
    <property type="component" value="Segment"/>
</dbReference>
<proteinExistence type="predicted"/>
<name>Y035_OSHVF</name>
<keyword id="KW-1185">Reference proteome</keyword>
<sequence>MAPIRNRRGKRNNLKLKLNLTEEITIRNNCNFDSLPIRGPKEVRNPCRSRYAPMTRAEKKYQDRQNRDFYCSTDASYWGIYYRNSHPLKGVTYRSHVMFGIKKFIPDMSPKNAIDYNRWVDVSSDLNHLEDDDFLELEGQYAAGIIKTSDLSKYALQ</sequence>
<organismHost>
    <name type="scientific">Magallana gigas</name>
    <name type="common">Pacific oyster</name>
    <name type="synonym">Crassostrea gigas</name>
    <dbReference type="NCBI Taxonomy" id="29159"/>
</organismHost>
<organismHost>
    <name type="scientific">Pecten maximus</name>
    <name type="common">King scallop</name>
    <name type="synonym">Pilgrim's clam</name>
    <dbReference type="NCBI Taxonomy" id="6579"/>
</organismHost>
<organism>
    <name type="scientific">Ostreid herpesvirus 1 (isolate France)</name>
    <name type="common">OsHV-1</name>
    <name type="synonym">Pacific oyster herpesvirus</name>
    <dbReference type="NCBI Taxonomy" id="654903"/>
    <lineage>
        <taxon>Viruses</taxon>
        <taxon>Duplodnaviria</taxon>
        <taxon>Heunggongvirae</taxon>
        <taxon>Peploviricota</taxon>
        <taxon>Herviviricetes</taxon>
        <taxon>Herpesvirales</taxon>
        <taxon>Malacoherpesviridae</taxon>
        <taxon>Ostreavirus</taxon>
        <taxon>Ostreavirus ostreidmalaco1</taxon>
        <taxon>Ostreid herpesvirus 1</taxon>
    </lineage>
</organism>
<protein>
    <recommendedName>
        <fullName>Uncharacterized protein ORF35</fullName>
    </recommendedName>
</protein>
<reference key="1">
    <citation type="journal article" date="2005" name="J. Gen. Virol.">
        <title>A novel class of herpesvirus with bivalve hosts.</title>
        <authorList>
            <person name="Davison A.J."/>
            <person name="Trus B.L."/>
            <person name="Cheng N."/>
            <person name="Steven A.C."/>
            <person name="Watson M.S."/>
            <person name="Cunningham C."/>
            <person name="Le Deuff R.M."/>
            <person name="Renault T."/>
        </authorList>
    </citation>
    <scope>NUCLEOTIDE SEQUENCE [LARGE SCALE GENOMIC DNA]</scope>
</reference>
<accession>Q6R7I9</accession>